<feature type="chain" id="PRO_0000229097" description="1-(5-phosphoribosyl)-5-[(5-phosphoribosylamino)methylideneamino] imidazole-4-carboxamide isomerase">
    <location>
        <begin position="1"/>
        <end position="244"/>
    </location>
</feature>
<feature type="active site" description="Proton acceptor" evidence="1">
    <location>
        <position position="10"/>
    </location>
</feature>
<feature type="active site" description="Proton donor" evidence="1">
    <location>
        <position position="132"/>
    </location>
</feature>
<evidence type="ECO:0000255" key="1">
    <source>
        <dbReference type="HAMAP-Rule" id="MF_01014"/>
    </source>
</evidence>
<gene>
    <name evidence="1" type="primary">hisA</name>
    <name type="ordered locus">XOO2123</name>
</gene>
<proteinExistence type="inferred from homology"/>
<sequence length="244" mass="25758">MSFTVYPALDIRNGRVVRLLQGDYARETHYGNDVLPRAQAFADAGAQWMHLVDLDAAKAGGYTLATTLGEIARATGLQVQTGGGVRSRDDVASILDAGAARVVIGSLAVRDSEMVIAWLQEFGADRLTIALDTRQDTDGIWQLPVHGWTETADATLDQLAVRYAQAGLKHLLCTDIARDGMLSGPNAALYAHLRSLTPQLQVQVSGGARNLADVAAAKAAGCAGIVLGKALLEGHLDLDEALAC</sequence>
<name>HIS4_XANOM</name>
<protein>
    <recommendedName>
        <fullName evidence="1">1-(5-phosphoribosyl)-5-[(5-phosphoribosylamino)methylideneamino] imidazole-4-carboxamide isomerase</fullName>
        <ecNumber evidence="1">5.3.1.16</ecNumber>
    </recommendedName>
    <alternativeName>
        <fullName evidence="1">Phosphoribosylformimino-5-aminoimidazole carboxamide ribotide isomerase</fullName>
    </alternativeName>
</protein>
<dbReference type="EC" id="5.3.1.16" evidence="1"/>
<dbReference type="EMBL" id="AP008229">
    <property type="protein sequence ID" value="BAE68878.1"/>
    <property type="molecule type" value="Genomic_DNA"/>
</dbReference>
<dbReference type="RefSeq" id="WP_011258946.1">
    <property type="nucleotide sequence ID" value="NC_007705.1"/>
</dbReference>
<dbReference type="SMR" id="Q2P3J9"/>
<dbReference type="KEGG" id="xom:XOO2123"/>
<dbReference type="HOGENOM" id="CLU_048577_1_2_6"/>
<dbReference type="UniPathway" id="UPA00031">
    <property type="reaction ID" value="UER00009"/>
</dbReference>
<dbReference type="GO" id="GO:0005737">
    <property type="term" value="C:cytoplasm"/>
    <property type="evidence" value="ECO:0007669"/>
    <property type="project" value="UniProtKB-SubCell"/>
</dbReference>
<dbReference type="GO" id="GO:0003949">
    <property type="term" value="F:1-(5-phosphoribosyl)-5-[(5-phosphoribosylamino)methylideneamino]imidazole-4-carboxamide isomerase activity"/>
    <property type="evidence" value="ECO:0007669"/>
    <property type="project" value="UniProtKB-UniRule"/>
</dbReference>
<dbReference type="GO" id="GO:0000105">
    <property type="term" value="P:L-histidine biosynthetic process"/>
    <property type="evidence" value="ECO:0007669"/>
    <property type="project" value="UniProtKB-UniRule"/>
</dbReference>
<dbReference type="GO" id="GO:0000162">
    <property type="term" value="P:L-tryptophan biosynthetic process"/>
    <property type="evidence" value="ECO:0007669"/>
    <property type="project" value="TreeGrafter"/>
</dbReference>
<dbReference type="CDD" id="cd04732">
    <property type="entry name" value="HisA"/>
    <property type="match status" value="1"/>
</dbReference>
<dbReference type="FunFam" id="3.20.20.70:FF:000009">
    <property type="entry name" value="1-(5-phosphoribosyl)-5-[(5-phosphoribosylamino)methylideneamino] imidazole-4-carboxamide isomerase"/>
    <property type="match status" value="1"/>
</dbReference>
<dbReference type="Gene3D" id="3.20.20.70">
    <property type="entry name" value="Aldolase class I"/>
    <property type="match status" value="1"/>
</dbReference>
<dbReference type="HAMAP" id="MF_01014">
    <property type="entry name" value="HisA"/>
    <property type="match status" value="1"/>
</dbReference>
<dbReference type="InterPro" id="IPR013785">
    <property type="entry name" value="Aldolase_TIM"/>
</dbReference>
<dbReference type="InterPro" id="IPR006062">
    <property type="entry name" value="His_biosynth"/>
</dbReference>
<dbReference type="InterPro" id="IPR006063">
    <property type="entry name" value="HisA_bact_arch"/>
</dbReference>
<dbReference type="InterPro" id="IPR044524">
    <property type="entry name" value="Isoase_HisA-like"/>
</dbReference>
<dbReference type="InterPro" id="IPR023016">
    <property type="entry name" value="Isoase_HisA-like_bact"/>
</dbReference>
<dbReference type="InterPro" id="IPR011060">
    <property type="entry name" value="RibuloseP-bd_barrel"/>
</dbReference>
<dbReference type="NCBIfam" id="TIGR00007">
    <property type="entry name" value="1-(5-phosphoribosyl)-5-[(5-phosphoribosylamino)methylideneamino]imidazole-4-carboxamide isomerase"/>
    <property type="match status" value="1"/>
</dbReference>
<dbReference type="PANTHER" id="PTHR43090">
    <property type="entry name" value="1-(5-PHOSPHORIBOSYL)-5-[(5-PHOSPHORIBOSYLAMINO)METHYLIDENEAMINO] IMIDAZOLE-4-CARBOXAMIDE ISOMERASE"/>
    <property type="match status" value="1"/>
</dbReference>
<dbReference type="PANTHER" id="PTHR43090:SF2">
    <property type="entry name" value="1-(5-PHOSPHORIBOSYL)-5-[(5-PHOSPHORIBOSYLAMINO)METHYLIDENEAMINO] IMIDAZOLE-4-CARBOXAMIDE ISOMERASE"/>
    <property type="match status" value="1"/>
</dbReference>
<dbReference type="Pfam" id="PF00977">
    <property type="entry name" value="His_biosynth"/>
    <property type="match status" value="1"/>
</dbReference>
<dbReference type="SUPFAM" id="SSF51366">
    <property type="entry name" value="Ribulose-phoshate binding barrel"/>
    <property type="match status" value="1"/>
</dbReference>
<reference key="1">
    <citation type="journal article" date="2005" name="Jpn. Agric. Res. Q.">
        <title>Genome sequence of Xanthomonas oryzae pv. oryzae suggests contribution of large numbers of effector genes and insertion sequences to its race diversity.</title>
        <authorList>
            <person name="Ochiai H."/>
            <person name="Inoue Y."/>
            <person name="Takeya M."/>
            <person name="Sasaki A."/>
            <person name="Kaku H."/>
        </authorList>
    </citation>
    <scope>NUCLEOTIDE SEQUENCE [LARGE SCALE GENOMIC DNA]</scope>
    <source>
        <strain>MAFF 311018</strain>
    </source>
</reference>
<comment type="catalytic activity">
    <reaction evidence="1">
        <text>1-(5-phospho-beta-D-ribosyl)-5-[(5-phospho-beta-D-ribosylamino)methylideneamino]imidazole-4-carboxamide = 5-[(5-phospho-1-deoxy-D-ribulos-1-ylimino)methylamino]-1-(5-phospho-beta-D-ribosyl)imidazole-4-carboxamide</text>
        <dbReference type="Rhea" id="RHEA:15469"/>
        <dbReference type="ChEBI" id="CHEBI:58435"/>
        <dbReference type="ChEBI" id="CHEBI:58525"/>
        <dbReference type="EC" id="5.3.1.16"/>
    </reaction>
</comment>
<comment type="pathway">
    <text evidence="1">Amino-acid biosynthesis; L-histidine biosynthesis; L-histidine from 5-phospho-alpha-D-ribose 1-diphosphate: step 4/9.</text>
</comment>
<comment type="subcellular location">
    <subcellularLocation>
        <location evidence="1">Cytoplasm</location>
    </subcellularLocation>
</comment>
<comment type="similarity">
    <text evidence="1">Belongs to the HisA/HisF family.</text>
</comment>
<accession>Q2P3J9</accession>
<organism>
    <name type="scientific">Xanthomonas oryzae pv. oryzae (strain MAFF 311018)</name>
    <dbReference type="NCBI Taxonomy" id="342109"/>
    <lineage>
        <taxon>Bacteria</taxon>
        <taxon>Pseudomonadati</taxon>
        <taxon>Pseudomonadota</taxon>
        <taxon>Gammaproteobacteria</taxon>
        <taxon>Lysobacterales</taxon>
        <taxon>Lysobacteraceae</taxon>
        <taxon>Xanthomonas</taxon>
    </lineage>
</organism>
<keyword id="KW-0028">Amino-acid biosynthesis</keyword>
<keyword id="KW-0963">Cytoplasm</keyword>
<keyword id="KW-0368">Histidine biosynthesis</keyword>
<keyword id="KW-0413">Isomerase</keyword>